<evidence type="ECO:0000255" key="1">
    <source>
        <dbReference type="HAMAP-Rule" id="MF_01318"/>
    </source>
</evidence>
<evidence type="ECO:0000305" key="2"/>
<organism>
    <name type="scientific">Campylobacter jejuni subsp. doylei (strain ATCC BAA-1458 / RM4099 / 269.97)</name>
    <dbReference type="NCBI Taxonomy" id="360109"/>
    <lineage>
        <taxon>Bacteria</taxon>
        <taxon>Pseudomonadati</taxon>
        <taxon>Campylobacterota</taxon>
        <taxon>Epsilonproteobacteria</taxon>
        <taxon>Campylobacterales</taxon>
        <taxon>Campylobacteraceae</taxon>
        <taxon>Campylobacter</taxon>
    </lineage>
</organism>
<gene>
    <name evidence="1" type="primary">rplA</name>
    <name type="ordered locus">JJD26997_1459</name>
</gene>
<sequence>MAKIAKRLKELSQKIDSNKEYALSDAIDTIKTLKSAKFDETVEIALKLNVDPRHADQMVRGSVVLPAGTGKKVRVAVIAKDAKADEAKNAGADIVGSDDLVEEIQKGNMNFDVLIATPNLMGLVGKVGRILGPKGLMPNPKTGTVTMDVAQAVNNAKSGQVNFRVDKQGNIHAGLGKVSFSKEQLWDNVSTFVKAINKHKPAAAKGRYIKNAALSLTMSPSVKLETQELLDMK</sequence>
<keyword id="KW-0678">Repressor</keyword>
<keyword id="KW-0687">Ribonucleoprotein</keyword>
<keyword id="KW-0689">Ribosomal protein</keyword>
<keyword id="KW-0694">RNA-binding</keyword>
<keyword id="KW-0699">rRNA-binding</keyword>
<keyword id="KW-0810">Translation regulation</keyword>
<keyword id="KW-0820">tRNA-binding</keyword>
<accession>A7H4Q8</accession>
<dbReference type="EMBL" id="CP000768">
    <property type="protein sequence ID" value="ABS44189.1"/>
    <property type="molecule type" value="Genomic_DNA"/>
</dbReference>
<dbReference type="SMR" id="A7H4Q8"/>
<dbReference type="KEGG" id="cjd:JJD26997_1459"/>
<dbReference type="HOGENOM" id="CLU_062853_0_0_7"/>
<dbReference type="Proteomes" id="UP000002302">
    <property type="component" value="Chromosome"/>
</dbReference>
<dbReference type="GO" id="GO:0022625">
    <property type="term" value="C:cytosolic large ribosomal subunit"/>
    <property type="evidence" value="ECO:0007669"/>
    <property type="project" value="TreeGrafter"/>
</dbReference>
<dbReference type="GO" id="GO:0019843">
    <property type="term" value="F:rRNA binding"/>
    <property type="evidence" value="ECO:0007669"/>
    <property type="project" value="UniProtKB-UniRule"/>
</dbReference>
<dbReference type="GO" id="GO:0003735">
    <property type="term" value="F:structural constituent of ribosome"/>
    <property type="evidence" value="ECO:0007669"/>
    <property type="project" value="InterPro"/>
</dbReference>
<dbReference type="GO" id="GO:0000049">
    <property type="term" value="F:tRNA binding"/>
    <property type="evidence" value="ECO:0007669"/>
    <property type="project" value="UniProtKB-KW"/>
</dbReference>
<dbReference type="GO" id="GO:0006417">
    <property type="term" value="P:regulation of translation"/>
    <property type="evidence" value="ECO:0007669"/>
    <property type="project" value="UniProtKB-KW"/>
</dbReference>
<dbReference type="GO" id="GO:0006412">
    <property type="term" value="P:translation"/>
    <property type="evidence" value="ECO:0007669"/>
    <property type="project" value="UniProtKB-UniRule"/>
</dbReference>
<dbReference type="CDD" id="cd00403">
    <property type="entry name" value="Ribosomal_L1"/>
    <property type="match status" value="1"/>
</dbReference>
<dbReference type="FunFam" id="3.40.50.790:FF:000001">
    <property type="entry name" value="50S ribosomal protein L1"/>
    <property type="match status" value="1"/>
</dbReference>
<dbReference type="Gene3D" id="3.30.190.20">
    <property type="match status" value="1"/>
</dbReference>
<dbReference type="Gene3D" id="3.40.50.790">
    <property type="match status" value="1"/>
</dbReference>
<dbReference type="HAMAP" id="MF_01318_B">
    <property type="entry name" value="Ribosomal_uL1_B"/>
    <property type="match status" value="1"/>
</dbReference>
<dbReference type="InterPro" id="IPR005878">
    <property type="entry name" value="Ribosom_uL1_bac-type"/>
</dbReference>
<dbReference type="InterPro" id="IPR002143">
    <property type="entry name" value="Ribosomal_uL1"/>
</dbReference>
<dbReference type="InterPro" id="IPR023674">
    <property type="entry name" value="Ribosomal_uL1-like"/>
</dbReference>
<dbReference type="InterPro" id="IPR028364">
    <property type="entry name" value="Ribosomal_uL1/biogenesis"/>
</dbReference>
<dbReference type="InterPro" id="IPR016095">
    <property type="entry name" value="Ribosomal_uL1_3-a/b-sand"/>
</dbReference>
<dbReference type="InterPro" id="IPR023673">
    <property type="entry name" value="Ribosomal_uL1_CS"/>
</dbReference>
<dbReference type="NCBIfam" id="TIGR01169">
    <property type="entry name" value="rplA_bact"/>
    <property type="match status" value="1"/>
</dbReference>
<dbReference type="PANTHER" id="PTHR36427">
    <property type="entry name" value="54S RIBOSOMAL PROTEIN L1, MITOCHONDRIAL"/>
    <property type="match status" value="1"/>
</dbReference>
<dbReference type="PANTHER" id="PTHR36427:SF3">
    <property type="entry name" value="LARGE RIBOSOMAL SUBUNIT PROTEIN UL1M"/>
    <property type="match status" value="1"/>
</dbReference>
<dbReference type="Pfam" id="PF00687">
    <property type="entry name" value="Ribosomal_L1"/>
    <property type="match status" value="1"/>
</dbReference>
<dbReference type="PIRSF" id="PIRSF002155">
    <property type="entry name" value="Ribosomal_L1"/>
    <property type="match status" value="1"/>
</dbReference>
<dbReference type="SUPFAM" id="SSF56808">
    <property type="entry name" value="Ribosomal protein L1"/>
    <property type="match status" value="1"/>
</dbReference>
<dbReference type="PROSITE" id="PS01199">
    <property type="entry name" value="RIBOSOMAL_L1"/>
    <property type="match status" value="1"/>
</dbReference>
<proteinExistence type="inferred from homology"/>
<feature type="chain" id="PRO_1000051904" description="Large ribosomal subunit protein uL1">
    <location>
        <begin position="1"/>
        <end position="233"/>
    </location>
</feature>
<name>RL1_CAMJD</name>
<protein>
    <recommendedName>
        <fullName evidence="1">Large ribosomal subunit protein uL1</fullName>
    </recommendedName>
    <alternativeName>
        <fullName evidence="2">50S ribosomal protein L1</fullName>
    </alternativeName>
</protein>
<reference key="1">
    <citation type="submission" date="2007-07" db="EMBL/GenBank/DDBJ databases">
        <title>Complete genome sequence of Campylobacter jejuni subsp doylei 269.97 isolated from human blood.</title>
        <authorList>
            <person name="Fouts D.E."/>
            <person name="Mongodin E.F."/>
            <person name="Puiu D."/>
            <person name="Sebastian Y."/>
            <person name="Miller W.G."/>
            <person name="Mandrell R.E."/>
            <person name="Lastovica A.J."/>
            <person name="Nelson K.E."/>
        </authorList>
    </citation>
    <scope>NUCLEOTIDE SEQUENCE [LARGE SCALE GENOMIC DNA]</scope>
    <source>
        <strain>ATCC BAA-1458 / RM4099 / 269.97</strain>
    </source>
</reference>
<comment type="function">
    <text evidence="1">Binds directly to 23S rRNA. The L1 stalk is quite mobile in the ribosome, and is involved in E site tRNA release.</text>
</comment>
<comment type="function">
    <text evidence="1">Protein L1 is also a translational repressor protein, it controls the translation of the L11 operon by binding to its mRNA.</text>
</comment>
<comment type="subunit">
    <text evidence="1">Part of the 50S ribosomal subunit.</text>
</comment>
<comment type="similarity">
    <text evidence="1">Belongs to the universal ribosomal protein uL1 family.</text>
</comment>